<protein>
    <recommendedName>
        <fullName>Flagellin</fullName>
    </recommendedName>
    <alternativeName>
        <fullName>Phase 1-C flagellin</fullName>
    </alternativeName>
</protein>
<evidence type="ECO:0000250" key="1"/>
<evidence type="ECO:0000305" key="2"/>
<reference key="1">
    <citation type="journal article" date="1993" name="J. Bacteriol.">
        <title>Molecular analyses of the Salmonella g. flagellar antigen complex.</title>
        <authorList>
            <person name="Masten B.J."/>
            <person name="Joys T.M."/>
        </authorList>
    </citation>
    <scope>NUCLEOTIDE SEQUENCE [GENOMIC DNA]</scope>
</reference>
<accession>Q06969</accession>
<name>FLIC_SALBU</name>
<organism>
    <name type="scientific">Salmonella budapest</name>
    <dbReference type="NCBI Taxonomy" id="28143"/>
    <lineage>
        <taxon>Bacteria</taxon>
        <taxon>Pseudomonadati</taxon>
        <taxon>Pseudomonadota</taxon>
        <taxon>Gammaproteobacteria</taxon>
        <taxon>Enterobacterales</taxon>
        <taxon>Enterobacteriaceae</taxon>
        <taxon>Salmonella</taxon>
    </lineage>
</organism>
<keyword id="KW-0975">Bacterial flagellum</keyword>
<keyword id="KW-0964">Secreted</keyword>
<feature type="initiator methionine" description="Removed" evidence="1">
    <location>
        <position position="1"/>
    </location>
</feature>
<feature type="chain" id="PRO_0000182564" description="Flagellin">
    <location>
        <begin position="2"/>
        <end position="505"/>
    </location>
</feature>
<proteinExistence type="inferred from homology"/>
<dbReference type="EMBL" id="Z15065">
    <property type="protein sequence ID" value="CAA78774.1"/>
    <property type="molecule type" value="Genomic_DNA"/>
</dbReference>
<dbReference type="PIR" id="S33186">
    <property type="entry name" value="S33186"/>
</dbReference>
<dbReference type="SMR" id="Q06969"/>
<dbReference type="GO" id="GO:0009288">
    <property type="term" value="C:bacterial-type flagellum"/>
    <property type="evidence" value="ECO:0007669"/>
    <property type="project" value="UniProtKB-SubCell"/>
</dbReference>
<dbReference type="GO" id="GO:0005576">
    <property type="term" value="C:extracellular region"/>
    <property type="evidence" value="ECO:0007669"/>
    <property type="project" value="UniProtKB-SubCell"/>
</dbReference>
<dbReference type="GO" id="GO:0005198">
    <property type="term" value="F:structural molecule activity"/>
    <property type="evidence" value="ECO:0007669"/>
    <property type="project" value="InterPro"/>
</dbReference>
<dbReference type="Gene3D" id="6.10.280.190">
    <property type="match status" value="1"/>
</dbReference>
<dbReference type="Gene3D" id="2.30.220.10">
    <property type="entry name" value="f41 fragment of flagellin, C-terminal domain"/>
    <property type="match status" value="1"/>
</dbReference>
<dbReference type="Gene3D" id="2.170.280.10">
    <property type="entry name" value="f41 fragment of flagellin, middle domain"/>
    <property type="match status" value="1"/>
</dbReference>
<dbReference type="Gene3D" id="1.20.1330.10">
    <property type="entry name" value="f41 fragment of flagellin, N-terminal domain"/>
    <property type="match status" value="1"/>
</dbReference>
<dbReference type="Gene3D" id="6.10.10.10">
    <property type="entry name" value="Flagellar export chaperone, C-terminal domain"/>
    <property type="match status" value="1"/>
</dbReference>
<dbReference type="InterPro" id="IPR001492">
    <property type="entry name" value="Flagellin"/>
</dbReference>
<dbReference type="InterPro" id="IPR046358">
    <property type="entry name" value="Flagellin_C"/>
</dbReference>
<dbReference type="InterPro" id="IPR042187">
    <property type="entry name" value="Flagellin_C_sub2"/>
</dbReference>
<dbReference type="InterPro" id="IPR001029">
    <property type="entry name" value="Flagellin_N"/>
</dbReference>
<dbReference type="PANTHER" id="PTHR42792">
    <property type="entry name" value="FLAGELLIN"/>
    <property type="match status" value="1"/>
</dbReference>
<dbReference type="PANTHER" id="PTHR42792:SF2">
    <property type="entry name" value="FLAGELLIN"/>
    <property type="match status" value="1"/>
</dbReference>
<dbReference type="Pfam" id="PF00700">
    <property type="entry name" value="Flagellin_C"/>
    <property type="match status" value="1"/>
</dbReference>
<dbReference type="Pfam" id="PF00669">
    <property type="entry name" value="Flagellin_N"/>
    <property type="match status" value="1"/>
</dbReference>
<dbReference type="Pfam" id="PF22370">
    <property type="entry name" value="FliC-like_3rd"/>
    <property type="match status" value="1"/>
</dbReference>
<dbReference type="PRINTS" id="PR00207">
    <property type="entry name" value="FLAGELLIN"/>
</dbReference>
<dbReference type="SUPFAM" id="SSF64518">
    <property type="entry name" value="Phase 1 flagellin"/>
    <property type="match status" value="1"/>
</dbReference>
<gene>
    <name type="primary">fliC</name>
</gene>
<comment type="function">
    <text>Flagellin is the subunit protein which polymerizes to form the filaments of bacterial flagella.</text>
</comment>
<comment type="subcellular location">
    <subcellularLocation>
        <location>Secreted</location>
    </subcellularLocation>
    <subcellularLocation>
        <location>Bacterial flagellum</location>
    </subcellularLocation>
</comment>
<comment type="miscellaneous">
    <text>Individual Salmonella serotypes usually alternate between the production of 2 antigenic forms of flagella, termed phase 1 and phase 2, each specified by separate structural genes.</text>
</comment>
<comment type="similarity">
    <text evidence="2">Belongs to the bacterial flagellin family.</text>
</comment>
<sequence>MAQVINTNSLSLLTQNNLNKSQSSLSSAIERLSSGLRINSAKDDAAGQAIANRFTSNIKGLTQASRNANDGISIAQTTEGALNEINNNLQRVRELSVQATNGTNSDSDLKSIQDEIQQRLEEIDRVSNQTQFNGVKVLSQDNQMKIQVGANDGETITIDLQKIDVKSLGLDGFNVNGPKEATVGDLKSSFKNVTGYDTYAAGADKYRVDINSGAVVTDAAAPDKVYVNAANGQLTTDDAENNTAVNLFKTTKSTAGTDEAKAIAGAIKGGKEGDTFDYKGVSFTIDTKAGNDGNGTVSTTINGEKVTLTVADITAGAANVNDATLQSSKNVYTSVVNGQFTFDDKTKNESAKLSDLEANNAVKGESKITVNGAEYTANAAGDKVTLAGKTMFIDKTASGVSTLINEDAAAAKKSTANPLASIDSALSKVDAVRSSLGAIQNRFDSAITNLGNTVTNLNSARSRIEDADYATEVSNMSKAQILQQAGTSVLAQANQVPQNVLSLLR</sequence>